<protein>
    <recommendedName>
        <fullName evidence="1">DNA-directed RNA polymerase subunit alpha</fullName>
        <shortName evidence="1">RNAP subunit alpha</shortName>
        <ecNumber evidence="1">2.7.7.6</ecNumber>
    </recommendedName>
    <alternativeName>
        <fullName evidence="1">RNA polymerase subunit alpha</fullName>
    </alternativeName>
    <alternativeName>
        <fullName evidence="1">Transcriptase subunit alpha</fullName>
    </alternativeName>
</protein>
<gene>
    <name evidence="1" type="primary">rpoA</name>
    <name type="ordered locus">DP1152</name>
</gene>
<evidence type="ECO:0000255" key="1">
    <source>
        <dbReference type="HAMAP-Rule" id="MF_00059"/>
    </source>
</evidence>
<dbReference type="EC" id="2.7.7.6" evidence="1"/>
<dbReference type="EMBL" id="CR522870">
    <property type="protein sequence ID" value="CAG35881.1"/>
    <property type="molecule type" value="Genomic_DNA"/>
</dbReference>
<dbReference type="RefSeq" id="WP_011188393.1">
    <property type="nucleotide sequence ID" value="NC_006138.1"/>
</dbReference>
<dbReference type="SMR" id="Q6AP43"/>
<dbReference type="STRING" id="177439.DP1152"/>
<dbReference type="KEGG" id="dps:DP1152"/>
<dbReference type="eggNOG" id="COG0202">
    <property type="taxonomic scope" value="Bacteria"/>
</dbReference>
<dbReference type="HOGENOM" id="CLU_053084_0_1_7"/>
<dbReference type="OrthoDB" id="9805706at2"/>
<dbReference type="Proteomes" id="UP000000602">
    <property type="component" value="Chromosome"/>
</dbReference>
<dbReference type="GO" id="GO:0005737">
    <property type="term" value="C:cytoplasm"/>
    <property type="evidence" value="ECO:0007669"/>
    <property type="project" value="UniProtKB-ARBA"/>
</dbReference>
<dbReference type="GO" id="GO:0000428">
    <property type="term" value="C:DNA-directed RNA polymerase complex"/>
    <property type="evidence" value="ECO:0007669"/>
    <property type="project" value="UniProtKB-KW"/>
</dbReference>
<dbReference type="GO" id="GO:0003677">
    <property type="term" value="F:DNA binding"/>
    <property type="evidence" value="ECO:0007669"/>
    <property type="project" value="UniProtKB-UniRule"/>
</dbReference>
<dbReference type="GO" id="GO:0003899">
    <property type="term" value="F:DNA-directed RNA polymerase activity"/>
    <property type="evidence" value="ECO:0007669"/>
    <property type="project" value="UniProtKB-UniRule"/>
</dbReference>
<dbReference type="GO" id="GO:0046983">
    <property type="term" value="F:protein dimerization activity"/>
    <property type="evidence" value="ECO:0007669"/>
    <property type="project" value="InterPro"/>
</dbReference>
<dbReference type="GO" id="GO:0006351">
    <property type="term" value="P:DNA-templated transcription"/>
    <property type="evidence" value="ECO:0007669"/>
    <property type="project" value="UniProtKB-UniRule"/>
</dbReference>
<dbReference type="CDD" id="cd06928">
    <property type="entry name" value="RNAP_alpha_NTD"/>
    <property type="match status" value="1"/>
</dbReference>
<dbReference type="FunFam" id="1.10.150.20:FF:000001">
    <property type="entry name" value="DNA-directed RNA polymerase subunit alpha"/>
    <property type="match status" value="1"/>
</dbReference>
<dbReference type="FunFam" id="2.170.120.12:FF:000001">
    <property type="entry name" value="DNA-directed RNA polymerase subunit alpha"/>
    <property type="match status" value="1"/>
</dbReference>
<dbReference type="Gene3D" id="1.10.150.20">
    <property type="entry name" value="5' to 3' exonuclease, C-terminal subdomain"/>
    <property type="match status" value="1"/>
</dbReference>
<dbReference type="Gene3D" id="2.170.120.12">
    <property type="entry name" value="DNA-directed RNA polymerase, insert domain"/>
    <property type="match status" value="1"/>
</dbReference>
<dbReference type="Gene3D" id="3.30.1360.10">
    <property type="entry name" value="RNA polymerase, RBP11-like subunit"/>
    <property type="match status" value="1"/>
</dbReference>
<dbReference type="HAMAP" id="MF_00059">
    <property type="entry name" value="RNApol_bact_RpoA"/>
    <property type="match status" value="1"/>
</dbReference>
<dbReference type="InterPro" id="IPR011262">
    <property type="entry name" value="DNA-dir_RNA_pol_insert"/>
</dbReference>
<dbReference type="InterPro" id="IPR011263">
    <property type="entry name" value="DNA-dir_RNA_pol_RpoA/D/Rpb3"/>
</dbReference>
<dbReference type="InterPro" id="IPR011773">
    <property type="entry name" value="DNA-dir_RpoA"/>
</dbReference>
<dbReference type="InterPro" id="IPR036603">
    <property type="entry name" value="RBP11-like"/>
</dbReference>
<dbReference type="InterPro" id="IPR011260">
    <property type="entry name" value="RNAP_asu_C"/>
</dbReference>
<dbReference type="InterPro" id="IPR036643">
    <property type="entry name" value="RNApol_insert_sf"/>
</dbReference>
<dbReference type="NCBIfam" id="NF003513">
    <property type="entry name" value="PRK05182.1-2"/>
    <property type="match status" value="1"/>
</dbReference>
<dbReference type="NCBIfam" id="NF003519">
    <property type="entry name" value="PRK05182.2-5"/>
    <property type="match status" value="1"/>
</dbReference>
<dbReference type="NCBIfam" id="TIGR02027">
    <property type="entry name" value="rpoA"/>
    <property type="match status" value="1"/>
</dbReference>
<dbReference type="Pfam" id="PF01000">
    <property type="entry name" value="RNA_pol_A_bac"/>
    <property type="match status" value="1"/>
</dbReference>
<dbReference type="Pfam" id="PF03118">
    <property type="entry name" value="RNA_pol_A_CTD"/>
    <property type="match status" value="1"/>
</dbReference>
<dbReference type="Pfam" id="PF01193">
    <property type="entry name" value="RNA_pol_L"/>
    <property type="match status" value="1"/>
</dbReference>
<dbReference type="SMART" id="SM00662">
    <property type="entry name" value="RPOLD"/>
    <property type="match status" value="1"/>
</dbReference>
<dbReference type="SUPFAM" id="SSF47789">
    <property type="entry name" value="C-terminal domain of RNA polymerase alpha subunit"/>
    <property type="match status" value="1"/>
</dbReference>
<dbReference type="SUPFAM" id="SSF56553">
    <property type="entry name" value="Insert subdomain of RNA polymerase alpha subunit"/>
    <property type="match status" value="1"/>
</dbReference>
<dbReference type="SUPFAM" id="SSF55257">
    <property type="entry name" value="RBP11-like subunits of RNA polymerase"/>
    <property type="match status" value="1"/>
</dbReference>
<name>RPOA_DESPS</name>
<feature type="chain" id="PRO_0000175302" description="DNA-directed RNA polymerase subunit alpha">
    <location>
        <begin position="1"/>
        <end position="343"/>
    </location>
</feature>
<feature type="region of interest" description="Alpha N-terminal domain (alpha-NTD)" evidence="1">
    <location>
        <begin position="1"/>
        <end position="243"/>
    </location>
</feature>
<feature type="region of interest" description="Alpha C-terminal domain (alpha-CTD)" evidence="1">
    <location>
        <begin position="261"/>
        <end position="343"/>
    </location>
</feature>
<sequence>MTQEIDEKIPVYRNWHELIRPEKVEIDQSNHSETYGKFICQPLERGFATTIGNSLRRILLSSIQGAAITTVKIEGALHELTSMKDVKEDVSEIILNLKQVRLKLNCEESQTVRIEKQGPGPVVAGDIIPSAFVEIMNEDHILCNLTSDMTFCAELTVEWGKGYQPAENQEKDDLTVGQIPIDAIFTPVKKIQYVVSSARVGQQTDYDKLTYEIETDGSVRPEDALAYSAKILKEQLDIFINFDETAVEPEKKAVETEEKQENPYLDKPVEDLELSVRSANCLKNADINFIGDLVQRTDQEMLKTKNFGRKSLNEIKTLLQDMDLTLGVKLEGWNAPSDAETEE</sequence>
<keyword id="KW-0240">DNA-directed RNA polymerase</keyword>
<keyword id="KW-0548">Nucleotidyltransferase</keyword>
<keyword id="KW-1185">Reference proteome</keyword>
<keyword id="KW-0804">Transcription</keyword>
<keyword id="KW-0808">Transferase</keyword>
<comment type="function">
    <text evidence="1">DNA-dependent RNA polymerase catalyzes the transcription of DNA into RNA using the four ribonucleoside triphosphates as substrates.</text>
</comment>
<comment type="catalytic activity">
    <reaction evidence="1">
        <text>RNA(n) + a ribonucleoside 5'-triphosphate = RNA(n+1) + diphosphate</text>
        <dbReference type="Rhea" id="RHEA:21248"/>
        <dbReference type="Rhea" id="RHEA-COMP:14527"/>
        <dbReference type="Rhea" id="RHEA-COMP:17342"/>
        <dbReference type="ChEBI" id="CHEBI:33019"/>
        <dbReference type="ChEBI" id="CHEBI:61557"/>
        <dbReference type="ChEBI" id="CHEBI:140395"/>
        <dbReference type="EC" id="2.7.7.6"/>
    </reaction>
</comment>
<comment type="subunit">
    <text evidence="1">Homodimer. The RNAP catalytic core consists of 2 alpha, 1 beta, 1 beta' and 1 omega subunit. When a sigma factor is associated with the core the holoenzyme is formed, which can initiate transcription.</text>
</comment>
<comment type="domain">
    <text evidence="1">The N-terminal domain is essential for RNAP assembly and basal transcription, whereas the C-terminal domain is involved in interaction with transcriptional regulators and with upstream promoter elements.</text>
</comment>
<comment type="similarity">
    <text evidence="1">Belongs to the RNA polymerase alpha chain family.</text>
</comment>
<proteinExistence type="inferred from homology"/>
<organism>
    <name type="scientific">Desulfotalea psychrophila (strain LSv54 / DSM 12343)</name>
    <dbReference type="NCBI Taxonomy" id="177439"/>
    <lineage>
        <taxon>Bacteria</taxon>
        <taxon>Pseudomonadati</taxon>
        <taxon>Thermodesulfobacteriota</taxon>
        <taxon>Desulfobulbia</taxon>
        <taxon>Desulfobulbales</taxon>
        <taxon>Desulfocapsaceae</taxon>
        <taxon>Desulfotalea</taxon>
    </lineage>
</organism>
<reference key="1">
    <citation type="journal article" date="2004" name="Environ. Microbiol.">
        <title>The genome of Desulfotalea psychrophila, a sulfate-reducing bacterium from permanently cold Arctic sediments.</title>
        <authorList>
            <person name="Rabus R."/>
            <person name="Ruepp A."/>
            <person name="Frickey T."/>
            <person name="Rattei T."/>
            <person name="Fartmann B."/>
            <person name="Stark M."/>
            <person name="Bauer M."/>
            <person name="Zibat A."/>
            <person name="Lombardot T."/>
            <person name="Becker I."/>
            <person name="Amann J."/>
            <person name="Gellner K."/>
            <person name="Teeling H."/>
            <person name="Leuschner W.D."/>
            <person name="Gloeckner F.-O."/>
            <person name="Lupas A.N."/>
            <person name="Amann R."/>
            <person name="Klenk H.-P."/>
        </authorList>
    </citation>
    <scope>NUCLEOTIDE SEQUENCE [LARGE SCALE GENOMIC DNA]</scope>
    <source>
        <strain>DSM 12343 / LSv54</strain>
    </source>
</reference>
<accession>Q6AP43</accession>